<evidence type="ECO:0000256" key="1">
    <source>
        <dbReference type="SAM" id="MobiDB-lite"/>
    </source>
</evidence>
<evidence type="ECO:0000269" key="2">
    <source>
    </source>
</evidence>
<evidence type="ECO:0000305" key="3"/>
<dbReference type="EC" id="2.3.2.27"/>
<dbReference type="EMBL" id="AP004864">
    <property type="protein sequence ID" value="BAD21885.1"/>
    <property type="molecule type" value="Genomic_DNA"/>
</dbReference>
<dbReference type="EMBL" id="AP008208">
    <property type="protein sequence ID" value="BAF08783.1"/>
    <property type="molecule type" value="Genomic_DNA"/>
</dbReference>
<dbReference type="EMBL" id="AP014958">
    <property type="protein sequence ID" value="BAS78736.1"/>
    <property type="molecule type" value="Genomic_DNA"/>
</dbReference>
<dbReference type="EMBL" id="CM000139">
    <property type="protein sequence ID" value="EEE57015.1"/>
    <property type="molecule type" value="Genomic_DNA"/>
</dbReference>
<dbReference type="EMBL" id="AK106789">
    <property type="status" value="NOT_ANNOTATED_CDS"/>
    <property type="molecule type" value="mRNA"/>
</dbReference>
<dbReference type="RefSeq" id="XP_015624182.1">
    <property type="nucleotide sequence ID" value="XM_015768696.1"/>
</dbReference>
<dbReference type="SMR" id="Q6K762"/>
<dbReference type="FunCoup" id="Q6K762">
    <property type="interactions" value="764"/>
</dbReference>
<dbReference type="STRING" id="39947.Q6K762"/>
<dbReference type="PaxDb" id="39947-Q6K762"/>
<dbReference type="EnsemblPlants" id="Os02t0490000-01">
    <property type="protein sequence ID" value="Os02t0490000-01"/>
    <property type="gene ID" value="Os02g0490000"/>
</dbReference>
<dbReference type="Gramene" id="Os02t0490000-01">
    <property type="protein sequence ID" value="Os02t0490000-01"/>
    <property type="gene ID" value="Os02g0490000"/>
</dbReference>
<dbReference type="KEGG" id="dosa:Os02g0490000"/>
<dbReference type="eggNOG" id="KOG0167">
    <property type="taxonomic scope" value="Eukaryota"/>
</dbReference>
<dbReference type="HOGENOM" id="CLU_032955_0_0_1"/>
<dbReference type="InParanoid" id="Q6K762"/>
<dbReference type="OMA" id="FHDVPQM"/>
<dbReference type="OrthoDB" id="655609at2759"/>
<dbReference type="UniPathway" id="UPA00143"/>
<dbReference type="Proteomes" id="UP000000763">
    <property type="component" value="Chromosome 2"/>
</dbReference>
<dbReference type="Proteomes" id="UP000007752">
    <property type="component" value="Chromosome 2"/>
</dbReference>
<dbReference type="Proteomes" id="UP000059680">
    <property type="component" value="Chromosome 2"/>
</dbReference>
<dbReference type="GO" id="GO:0005737">
    <property type="term" value="C:cytoplasm"/>
    <property type="evidence" value="ECO:0000318"/>
    <property type="project" value="GO_Central"/>
</dbReference>
<dbReference type="GO" id="GO:0005634">
    <property type="term" value="C:nucleus"/>
    <property type="evidence" value="ECO:0000318"/>
    <property type="project" value="GO_Central"/>
</dbReference>
<dbReference type="GO" id="GO:0004842">
    <property type="term" value="F:ubiquitin-protein transferase activity"/>
    <property type="evidence" value="ECO:0000314"/>
    <property type="project" value="UniProtKB"/>
</dbReference>
<dbReference type="GO" id="GO:0016567">
    <property type="term" value="P:protein ubiquitination"/>
    <property type="evidence" value="ECO:0000314"/>
    <property type="project" value="UniProtKB"/>
</dbReference>
<dbReference type="FunFam" id="1.25.10.10:FF:000895">
    <property type="entry name" value="RING-type E3 ubiquitin transferase"/>
    <property type="match status" value="1"/>
</dbReference>
<dbReference type="FunFam" id="3.30.40.10:FF:000870">
    <property type="entry name" value="RING-type E3 ubiquitin transferase"/>
    <property type="match status" value="1"/>
</dbReference>
<dbReference type="Gene3D" id="1.25.10.10">
    <property type="entry name" value="Leucine-rich Repeat Variant"/>
    <property type="match status" value="1"/>
</dbReference>
<dbReference type="Gene3D" id="3.30.40.10">
    <property type="entry name" value="Zinc/RING finger domain, C3HC4 (zinc finger)"/>
    <property type="match status" value="1"/>
</dbReference>
<dbReference type="InterPro" id="IPR011989">
    <property type="entry name" value="ARM-like"/>
</dbReference>
<dbReference type="InterPro" id="IPR016024">
    <property type="entry name" value="ARM-type_fold"/>
</dbReference>
<dbReference type="InterPro" id="IPR003613">
    <property type="entry name" value="Ubox_domain"/>
</dbReference>
<dbReference type="InterPro" id="IPR013083">
    <property type="entry name" value="Znf_RING/FYVE/PHD"/>
</dbReference>
<dbReference type="PANTHER" id="PTHR23315">
    <property type="entry name" value="U BOX DOMAIN-CONTAINING"/>
    <property type="match status" value="1"/>
</dbReference>
<dbReference type="PANTHER" id="PTHR23315:SF260">
    <property type="entry name" value="U-BOX DOMAIN-CONTAINING PROTEIN 73"/>
    <property type="match status" value="1"/>
</dbReference>
<dbReference type="Pfam" id="PF04564">
    <property type="entry name" value="U-box"/>
    <property type="match status" value="1"/>
</dbReference>
<dbReference type="SUPFAM" id="SSF48371">
    <property type="entry name" value="ARM repeat"/>
    <property type="match status" value="1"/>
</dbReference>
<dbReference type="SUPFAM" id="SSF57850">
    <property type="entry name" value="RING/U-box"/>
    <property type="match status" value="1"/>
</dbReference>
<dbReference type="PROSITE" id="PS51698">
    <property type="entry name" value="U_BOX"/>
    <property type="match status" value="1"/>
</dbReference>
<organism>
    <name type="scientific">Oryza sativa subsp. japonica</name>
    <name type="common">Rice</name>
    <dbReference type="NCBI Taxonomy" id="39947"/>
    <lineage>
        <taxon>Eukaryota</taxon>
        <taxon>Viridiplantae</taxon>
        <taxon>Streptophyta</taxon>
        <taxon>Embryophyta</taxon>
        <taxon>Tracheophyta</taxon>
        <taxon>Spermatophyta</taxon>
        <taxon>Magnoliopsida</taxon>
        <taxon>Liliopsida</taxon>
        <taxon>Poales</taxon>
        <taxon>Poaceae</taxon>
        <taxon>BOP clade</taxon>
        <taxon>Oryzoideae</taxon>
        <taxon>Oryzeae</taxon>
        <taxon>Oryzinae</taxon>
        <taxon>Oryza</taxon>
        <taxon>Oryza sativa</taxon>
    </lineage>
</organism>
<gene>
    <name type="primary">PUB73</name>
    <name type="ordered locus">Os02g0490000</name>
    <name type="ORF">OsJ_06787</name>
    <name type="ORF">OSJNBa0048K16.15</name>
</gene>
<proteinExistence type="evidence at transcript level"/>
<reference key="1">
    <citation type="journal article" date="2005" name="Nature">
        <title>The map-based sequence of the rice genome.</title>
        <authorList>
            <consortium name="International rice genome sequencing project (IRGSP)"/>
        </authorList>
    </citation>
    <scope>NUCLEOTIDE SEQUENCE [LARGE SCALE GENOMIC DNA]</scope>
    <source>
        <strain>cv. Nipponbare</strain>
    </source>
</reference>
<reference key="2">
    <citation type="journal article" date="2008" name="Nucleic Acids Res.">
        <title>The rice annotation project database (RAP-DB): 2008 update.</title>
        <authorList>
            <consortium name="The rice annotation project (RAP)"/>
        </authorList>
    </citation>
    <scope>GENOME REANNOTATION</scope>
    <source>
        <strain>cv. Nipponbare</strain>
    </source>
</reference>
<reference key="3">
    <citation type="journal article" date="2013" name="Rice">
        <title>Improvement of the Oryza sativa Nipponbare reference genome using next generation sequence and optical map data.</title>
        <authorList>
            <person name="Kawahara Y."/>
            <person name="de la Bastide M."/>
            <person name="Hamilton J.P."/>
            <person name="Kanamori H."/>
            <person name="McCombie W.R."/>
            <person name="Ouyang S."/>
            <person name="Schwartz D.C."/>
            <person name="Tanaka T."/>
            <person name="Wu J."/>
            <person name="Zhou S."/>
            <person name="Childs K.L."/>
            <person name="Davidson R.M."/>
            <person name="Lin H."/>
            <person name="Quesada-Ocampo L."/>
            <person name="Vaillancourt B."/>
            <person name="Sakai H."/>
            <person name="Lee S.S."/>
            <person name="Kim J."/>
            <person name="Numa H."/>
            <person name="Itoh T."/>
            <person name="Buell C.R."/>
            <person name="Matsumoto T."/>
        </authorList>
    </citation>
    <scope>GENOME REANNOTATION</scope>
    <source>
        <strain>cv. Nipponbare</strain>
    </source>
</reference>
<reference key="4">
    <citation type="journal article" date="2005" name="PLoS Biol.">
        <title>The genomes of Oryza sativa: a history of duplications.</title>
        <authorList>
            <person name="Yu J."/>
            <person name="Wang J."/>
            <person name="Lin W."/>
            <person name="Li S."/>
            <person name="Li H."/>
            <person name="Zhou J."/>
            <person name="Ni P."/>
            <person name="Dong W."/>
            <person name="Hu S."/>
            <person name="Zeng C."/>
            <person name="Zhang J."/>
            <person name="Zhang Y."/>
            <person name="Li R."/>
            <person name="Xu Z."/>
            <person name="Li S."/>
            <person name="Li X."/>
            <person name="Zheng H."/>
            <person name="Cong L."/>
            <person name="Lin L."/>
            <person name="Yin J."/>
            <person name="Geng J."/>
            <person name="Li G."/>
            <person name="Shi J."/>
            <person name="Liu J."/>
            <person name="Lv H."/>
            <person name="Li J."/>
            <person name="Wang J."/>
            <person name="Deng Y."/>
            <person name="Ran L."/>
            <person name="Shi X."/>
            <person name="Wang X."/>
            <person name="Wu Q."/>
            <person name="Li C."/>
            <person name="Ren X."/>
            <person name="Wang J."/>
            <person name="Wang X."/>
            <person name="Li D."/>
            <person name="Liu D."/>
            <person name="Zhang X."/>
            <person name="Ji Z."/>
            <person name="Zhao W."/>
            <person name="Sun Y."/>
            <person name="Zhang Z."/>
            <person name="Bao J."/>
            <person name="Han Y."/>
            <person name="Dong L."/>
            <person name="Ji J."/>
            <person name="Chen P."/>
            <person name="Wu S."/>
            <person name="Liu J."/>
            <person name="Xiao Y."/>
            <person name="Bu D."/>
            <person name="Tan J."/>
            <person name="Yang L."/>
            <person name="Ye C."/>
            <person name="Zhang J."/>
            <person name="Xu J."/>
            <person name="Zhou Y."/>
            <person name="Yu Y."/>
            <person name="Zhang B."/>
            <person name="Zhuang S."/>
            <person name="Wei H."/>
            <person name="Liu B."/>
            <person name="Lei M."/>
            <person name="Yu H."/>
            <person name="Li Y."/>
            <person name="Xu H."/>
            <person name="Wei S."/>
            <person name="He X."/>
            <person name="Fang L."/>
            <person name="Zhang Z."/>
            <person name="Zhang Y."/>
            <person name="Huang X."/>
            <person name="Su Z."/>
            <person name="Tong W."/>
            <person name="Li J."/>
            <person name="Tong Z."/>
            <person name="Li S."/>
            <person name="Ye J."/>
            <person name="Wang L."/>
            <person name="Fang L."/>
            <person name="Lei T."/>
            <person name="Chen C.-S."/>
            <person name="Chen H.-C."/>
            <person name="Xu Z."/>
            <person name="Li H."/>
            <person name="Huang H."/>
            <person name="Zhang F."/>
            <person name="Xu H."/>
            <person name="Li N."/>
            <person name="Zhao C."/>
            <person name="Li S."/>
            <person name="Dong L."/>
            <person name="Huang Y."/>
            <person name="Li L."/>
            <person name="Xi Y."/>
            <person name="Qi Q."/>
            <person name="Li W."/>
            <person name="Zhang B."/>
            <person name="Hu W."/>
            <person name="Zhang Y."/>
            <person name="Tian X."/>
            <person name="Jiao Y."/>
            <person name="Liang X."/>
            <person name="Jin J."/>
            <person name="Gao L."/>
            <person name="Zheng W."/>
            <person name="Hao B."/>
            <person name="Liu S.-M."/>
            <person name="Wang W."/>
            <person name="Yuan L."/>
            <person name="Cao M."/>
            <person name="McDermott J."/>
            <person name="Samudrala R."/>
            <person name="Wang J."/>
            <person name="Wong G.K.-S."/>
            <person name="Yang H."/>
        </authorList>
    </citation>
    <scope>NUCLEOTIDE SEQUENCE [LARGE SCALE GENOMIC DNA]</scope>
    <source>
        <strain>cv. Nipponbare</strain>
    </source>
</reference>
<reference key="5">
    <citation type="journal article" date="2003" name="Science">
        <title>Collection, mapping, and annotation of over 28,000 cDNA clones from japonica rice.</title>
        <authorList>
            <consortium name="The rice full-length cDNA consortium"/>
        </authorList>
    </citation>
    <scope>NUCLEOTIDE SEQUENCE [LARGE SCALE MRNA]</scope>
    <source>
        <strain>cv. Nipponbare</strain>
    </source>
</reference>
<reference key="6">
    <citation type="journal article" date="2008" name="Mol. Plant">
        <title>Classification, expression pattern, and E3 ligase activity assay of rice U-box-containing proteins.</title>
        <authorList>
            <person name="Zeng L.R."/>
            <person name="Park C.H."/>
            <person name="Venu R.C."/>
            <person name="Gough J."/>
            <person name="Wang G.L."/>
        </authorList>
    </citation>
    <scope>FUNCTION</scope>
    <scope>GENE FAMILY</scope>
    <scope>NOMENCLATURE</scope>
</reference>
<protein>
    <recommendedName>
        <fullName>U-box domain-containing protein 73</fullName>
        <ecNumber>2.3.2.27</ecNumber>
    </recommendedName>
    <alternativeName>
        <fullName>Plant U-box protein 73</fullName>
        <shortName>OsPUB73</shortName>
    </alternativeName>
    <alternativeName>
        <fullName evidence="3">RING-type E3 ubiquitin transferase PUB73</fullName>
    </alternativeName>
</protein>
<accession>Q6K762</accession>
<accession>A0A0P0VJ54</accession>
<name>PUB73_ORYSJ</name>
<sequence length="586" mass="64510">MDPEAEEAQLRLEMELAKKAKADMSGLQRSSSLGLDHAGLYPLPLPPGWRSAPTSPLRTPSSPPPLQFPPAWAADVAGTSGSAAPEDDGPARNAGADEATAGSAPKNEDPARAAGADDGPTRSDYAAMMRMALAKFQDDDAAADDEEAASAVMEQAMTGLMDLTYRKAKPPELPYEFATRWPIPIAHDGTLQAEVMRDPVILPSGYSVDQTYQNNQKRQNPWTNTSTFTDHSLPYSLSVPNHLLRDMISAWCLDHSDLSPSTTSDTPSTPLEPSEEEQIQRILKLFSGNSASQREALKLIQLLTKTTKGVQPCLAKYADIIPVLINLRRKYKSSWTQDLEEERLTIILNLTMHRQNREILAGQNELAGAIKKIVKKAGNRGKRTSSLAKVASIVAVLSEFDMFRKRMLDAGGMKMLRGMLKIKDTEVITEAATAILALYADGEGEQPARFHEVPQMLLECHMFTDGILLLLDRLPKSPRVFRKICDQALQLVNIVMAEDASGPVTRKGILSAISLIYEIVERDVGKMNAVKNMEDFIERLRQLSSDRLPMQKMLQVERIIRTLSDAFPAPTVRGRCQEPSGSRLLA</sequence>
<keyword id="KW-1185">Reference proteome</keyword>
<keyword id="KW-0808">Transferase</keyword>
<keyword id="KW-0833">Ubl conjugation pathway</keyword>
<feature type="chain" id="PRO_0000397693" description="U-box domain-containing protein 73">
    <location>
        <begin position="1"/>
        <end position="586"/>
    </location>
</feature>
<feature type="domain" description="U-box">
    <location>
        <begin position="182"/>
        <end position="258"/>
    </location>
</feature>
<feature type="region of interest" description="Disordered" evidence="1">
    <location>
        <begin position="21"/>
        <end position="122"/>
    </location>
</feature>
<feature type="compositionally biased region" description="Low complexity" evidence="1">
    <location>
        <begin position="50"/>
        <end position="60"/>
    </location>
</feature>
<feature type="sequence conflict" description="In Ref. 5; AK106789." evidence="3" ref="5">
    <original>V</original>
    <variation>A</variation>
    <location>
        <position position="453"/>
    </location>
</feature>
<comment type="function">
    <text evidence="2">Possesses E3 ubiquitin-protein ligase in vitro.</text>
</comment>
<comment type="catalytic activity">
    <reaction>
        <text>S-ubiquitinyl-[E2 ubiquitin-conjugating enzyme]-L-cysteine + [acceptor protein]-L-lysine = [E2 ubiquitin-conjugating enzyme]-L-cysteine + N(6)-ubiquitinyl-[acceptor protein]-L-lysine.</text>
        <dbReference type="EC" id="2.3.2.27"/>
    </reaction>
</comment>
<comment type="pathway">
    <text>Protein modification; protein ubiquitination.</text>
</comment>